<accession>P06708</accession>
<protein>
    <recommendedName>
        <fullName>Troponin C, isotype gamma</fullName>
    </recommendedName>
</protein>
<sequence length="150" mass="16924">MDTLDEEQLSALKKAFDSFDTDSKGFITPETVGVILRMMGVKISEKNLQQVIAETDEDGSGELEFEEFVELAAKFLIEEDEEALKAELKEAFRIYDKGGDGYITTDVLREILRELDNRLTEDDLDGIIEEVDEDGSGTLDFDEFMEMMSG</sequence>
<organism>
    <name type="scientific">Astacus leptodactylus</name>
    <name type="common">Turkish narrow-clawed crayfish</name>
    <name type="synonym">Pontastacus leptodactylus</name>
    <dbReference type="NCBI Taxonomy" id="6717"/>
    <lineage>
        <taxon>Eukaryota</taxon>
        <taxon>Metazoa</taxon>
        <taxon>Ecdysozoa</taxon>
        <taxon>Arthropoda</taxon>
        <taxon>Crustacea</taxon>
        <taxon>Multicrustacea</taxon>
        <taxon>Malacostraca</taxon>
        <taxon>Eumalacostraca</taxon>
        <taxon>Eucarida</taxon>
        <taxon>Decapoda</taxon>
        <taxon>Pleocyemata</taxon>
        <taxon>Astacidea</taxon>
        <taxon>Astacoidea</taxon>
        <taxon>Astacidae</taxon>
        <taxon>Astacus</taxon>
    </lineage>
</organism>
<reference key="1">
    <citation type="journal article" date="1989" name="J. Biol. Chem.">
        <title>Amino acid sequences of the two major isoforms of troponin C from crayfish.</title>
        <authorList>
            <person name="Kobayashi T."/>
            <person name="Takagi T."/>
            <person name="Konishi K."/>
            <person name="Wnuk W."/>
        </authorList>
    </citation>
    <scope>PROTEIN SEQUENCE</scope>
    <scope>ACETYLATION AT MET-1</scope>
</reference>
<reference key="2">
    <citation type="journal article" date="1986" name="J. Muscle Res. Cell Motil.">
        <title>Two isoforms of troponin C from crayfish. Their characterization and a comparison of their primary structure with the tertiary structure of troponin C.</title>
        <authorList>
            <person name="Wnuk W."/>
            <person name="Schoechlin M."/>
            <person name="Kobayashi T."/>
            <person name="Takagi T."/>
            <person name="Konishi K."/>
            <person name="Hoar P.E."/>
            <person name="Kerrick W.G.L."/>
        </authorList>
    </citation>
    <scope>PROTEIN SEQUENCE</scope>
</reference>
<reference key="3">
    <citation type="journal article" date="1989" name="J. Biol. Chem.">
        <title>Resolution and calcium-binding properties of the two major isoforms of troponin C from crayfish.</title>
        <authorList>
            <person name="Wnuk W."/>
        </authorList>
    </citation>
    <scope>CALCIUM-BINDING</scope>
</reference>
<proteinExistence type="evidence at protein level"/>
<comment type="function">
    <text>Troponin is the central regulatory protein of striated muscle contraction. Tn consists of three components: Tn-I which is the inhibitor of actomyosin ATPase, Tn-T which contains the binding site for tropomyosin and Tn-C. The binding of calcium to Tn-C abolishes the inhibitory action of Tn on actin filaments.</text>
</comment>
<comment type="miscellaneous">
    <text>There are two different troponin C in crayfish.</text>
</comment>
<comment type="miscellaneous">
    <text>This protein binds two calcium ions.</text>
</comment>
<comment type="similarity">
    <text evidence="3">Belongs to the troponin C family.</text>
</comment>
<dbReference type="PIR" id="B34380">
    <property type="entry name" value="B34380"/>
</dbReference>
<dbReference type="SMR" id="P06708"/>
<dbReference type="iPTMnet" id="P06708"/>
<dbReference type="GO" id="GO:0016460">
    <property type="term" value="C:myosin II complex"/>
    <property type="evidence" value="ECO:0007669"/>
    <property type="project" value="TreeGrafter"/>
</dbReference>
<dbReference type="GO" id="GO:0005509">
    <property type="term" value="F:calcium ion binding"/>
    <property type="evidence" value="ECO:0007669"/>
    <property type="project" value="InterPro"/>
</dbReference>
<dbReference type="CDD" id="cd00051">
    <property type="entry name" value="EFh"/>
    <property type="match status" value="1"/>
</dbReference>
<dbReference type="FunFam" id="1.10.238.10:FF:000178">
    <property type="entry name" value="Calmodulin-2 A"/>
    <property type="match status" value="2"/>
</dbReference>
<dbReference type="Gene3D" id="1.10.238.10">
    <property type="entry name" value="EF-hand"/>
    <property type="match status" value="2"/>
</dbReference>
<dbReference type="InterPro" id="IPR050230">
    <property type="entry name" value="CALM/Myosin/TropC-like"/>
</dbReference>
<dbReference type="InterPro" id="IPR011992">
    <property type="entry name" value="EF-hand-dom_pair"/>
</dbReference>
<dbReference type="InterPro" id="IPR018247">
    <property type="entry name" value="EF_Hand_1_Ca_BS"/>
</dbReference>
<dbReference type="InterPro" id="IPR002048">
    <property type="entry name" value="EF_hand_dom"/>
</dbReference>
<dbReference type="PANTHER" id="PTHR23048">
    <property type="entry name" value="MYOSIN LIGHT CHAIN 1, 3"/>
    <property type="match status" value="1"/>
</dbReference>
<dbReference type="PANTHER" id="PTHR23048:SF46">
    <property type="entry name" value="TROPONIN C-LIKE ISOFORM X1"/>
    <property type="match status" value="1"/>
</dbReference>
<dbReference type="Pfam" id="PF13499">
    <property type="entry name" value="EF-hand_7"/>
    <property type="match status" value="2"/>
</dbReference>
<dbReference type="SMART" id="SM00054">
    <property type="entry name" value="EFh"/>
    <property type="match status" value="4"/>
</dbReference>
<dbReference type="SUPFAM" id="SSF47473">
    <property type="entry name" value="EF-hand"/>
    <property type="match status" value="1"/>
</dbReference>
<dbReference type="PROSITE" id="PS00018">
    <property type="entry name" value="EF_HAND_1"/>
    <property type="match status" value="2"/>
</dbReference>
<dbReference type="PROSITE" id="PS50222">
    <property type="entry name" value="EF_HAND_2"/>
    <property type="match status" value="4"/>
</dbReference>
<evidence type="ECO:0000255" key="1">
    <source>
        <dbReference type="PROSITE-ProRule" id="PRU00448"/>
    </source>
</evidence>
<evidence type="ECO:0000269" key="2">
    <source>
    </source>
</evidence>
<evidence type="ECO:0000305" key="3"/>
<name>TNNC2_ASTLP</name>
<feature type="chain" id="PRO_0000073681" description="Troponin C, isotype gamma">
    <location>
        <begin position="1"/>
        <end position="150"/>
    </location>
</feature>
<feature type="domain" description="EF-hand 1" evidence="1">
    <location>
        <begin position="7"/>
        <end position="42"/>
    </location>
</feature>
<feature type="domain" description="EF-hand 2" evidence="1">
    <location>
        <begin position="43"/>
        <end position="78"/>
    </location>
</feature>
<feature type="domain" description="EF-hand 3" evidence="1">
    <location>
        <begin position="83"/>
        <end position="118"/>
    </location>
</feature>
<feature type="domain" description="EF-hand 4" evidence="1">
    <location>
        <begin position="119"/>
        <end position="150"/>
    </location>
</feature>
<feature type="binding site" evidence="1">
    <location>
        <position position="56"/>
    </location>
    <ligand>
        <name>Ca(2+)</name>
        <dbReference type="ChEBI" id="CHEBI:29108"/>
        <label>1</label>
    </ligand>
</feature>
<feature type="binding site" evidence="1">
    <location>
        <position position="58"/>
    </location>
    <ligand>
        <name>Ca(2+)</name>
        <dbReference type="ChEBI" id="CHEBI:29108"/>
        <label>1</label>
    </ligand>
</feature>
<feature type="binding site" evidence="1">
    <location>
        <position position="60"/>
    </location>
    <ligand>
        <name>Ca(2+)</name>
        <dbReference type="ChEBI" id="CHEBI:29108"/>
        <label>1</label>
    </ligand>
</feature>
<feature type="binding site" evidence="1">
    <location>
        <position position="62"/>
    </location>
    <ligand>
        <name>Ca(2+)</name>
        <dbReference type="ChEBI" id="CHEBI:29108"/>
        <label>1</label>
    </ligand>
</feature>
<feature type="binding site" evidence="1">
    <location>
        <position position="67"/>
    </location>
    <ligand>
        <name>Ca(2+)</name>
        <dbReference type="ChEBI" id="CHEBI:29108"/>
        <label>1</label>
    </ligand>
</feature>
<feature type="binding site" evidence="1">
    <location>
        <position position="132"/>
    </location>
    <ligand>
        <name>Ca(2+)</name>
        <dbReference type="ChEBI" id="CHEBI:29108"/>
        <label>2</label>
    </ligand>
</feature>
<feature type="binding site" evidence="1">
    <location>
        <position position="134"/>
    </location>
    <ligand>
        <name>Ca(2+)</name>
        <dbReference type="ChEBI" id="CHEBI:29108"/>
        <label>2</label>
    </ligand>
</feature>
<feature type="binding site" evidence="1">
    <location>
        <position position="136"/>
    </location>
    <ligand>
        <name>Ca(2+)</name>
        <dbReference type="ChEBI" id="CHEBI:29108"/>
        <label>2</label>
    </ligand>
</feature>
<feature type="binding site" evidence="1">
    <location>
        <position position="138"/>
    </location>
    <ligand>
        <name>Ca(2+)</name>
        <dbReference type="ChEBI" id="CHEBI:29108"/>
        <label>2</label>
    </ligand>
</feature>
<feature type="binding site" evidence="1">
    <location>
        <position position="143"/>
    </location>
    <ligand>
        <name>Ca(2+)</name>
        <dbReference type="ChEBI" id="CHEBI:29108"/>
        <label>2</label>
    </ligand>
</feature>
<feature type="modified residue" description="N-acetylmethionine" evidence="2">
    <location>
        <position position="1"/>
    </location>
</feature>
<keyword id="KW-0007">Acetylation</keyword>
<keyword id="KW-0106">Calcium</keyword>
<keyword id="KW-0903">Direct protein sequencing</keyword>
<keyword id="KW-0479">Metal-binding</keyword>
<keyword id="KW-0514">Muscle protein</keyword>
<keyword id="KW-0677">Repeat</keyword>